<protein>
    <recommendedName>
        <fullName>Endoplasmin</fullName>
        <ecNumber evidence="8">3.6.4.-</ecNumber>
    </recommendedName>
    <alternativeName>
        <fullName>94 kDa glucose-regulated protein</fullName>
        <shortName>GRP-94</shortName>
    </alternativeName>
    <alternativeName>
        <fullName evidence="12">Endoplasmic reticulum resident protein 99</fullName>
        <shortName evidence="12">ERp99</shortName>
    </alternativeName>
    <alternativeName>
        <fullName>Heat shock protein 90 kDa beta member 1</fullName>
    </alternativeName>
    <alternativeName>
        <fullName>Polymorphic tumor rejection antigen 1</fullName>
    </alternativeName>
    <alternativeName>
        <fullName>Tumor rejection antigen gp96</fullName>
    </alternativeName>
</protein>
<proteinExistence type="evidence at protein level"/>
<reference key="1">
    <citation type="journal article" date="1987" name="J. Biol. Chem.">
        <title>ERp99, an abundant, conserved glycoprotein of the endoplasmic reticulum, is homologous to the 90-kDa heat shock protein (hsp90) and the 94-kDa glucose regulated protein (GRP94).</title>
        <authorList>
            <person name="Mazzarella R.A."/>
            <person name="Green M."/>
        </authorList>
    </citation>
    <scope>NUCLEOTIDE SEQUENCE [MRNA]</scope>
</reference>
<reference key="2">
    <citation type="submission" date="2007-04" db="UniProtKB">
        <authorList>
            <person name="Lubec G."/>
            <person name="Kang S.U."/>
        </authorList>
    </citation>
    <scope>PROTEIN SEQUENCE OF 76-84; 88-95; 117-135; 143-156; 244-265; 270-285; 385-404; 416-428; 435-448; 512-530; 609-623 AND 640-660</scope>
    <scope>IDENTIFICATION BY MASS SPECTROMETRY</scope>
    <source>
        <strain>C57BL/6J</strain>
        <tissue>Brain</tissue>
    </source>
</reference>
<reference key="3">
    <citation type="journal article" date="1987" name="J. Mol. Biol.">
        <title>Isolation and identification of partial cDNA clones for endoplasmin, the major glycoprotein of mammalian endoplasmic reticulum.</title>
        <authorList>
            <person name="Smith M.J."/>
            <person name="Koch G.L.E."/>
        </authorList>
    </citation>
    <scope>NUCLEOTIDE SEQUENCE [MRNA] OF 378-507</scope>
</reference>
<reference key="4">
    <citation type="journal article" date="1987" name="Proc. Natl. Acad. Sci. U.S.A.">
        <title>5'-structural analysis of genes encoding polymorphic antigens of chemically induced tumors.</title>
        <authorList>
            <person name="Srivastava P.K."/>
            <person name="Chen Y.-T."/>
            <person name="Old L.J."/>
        </authorList>
    </citation>
    <scope>NUCLEOTIDE SEQUENCE [MRNA] OF 1-88</scope>
</reference>
<reference key="5">
    <citation type="journal article" date="1989" name="J. Biol. Chem.">
        <title>HSP100, a 100-kDa heat shock protein, is a Ca2+-calmodulin-regulated actin-binding protein.</title>
        <authorList>
            <person name="Koyasu S."/>
            <person name="Nishida E."/>
            <person name="Miyata Y."/>
            <person name="Sakai H."/>
            <person name="Yahara I."/>
        </authorList>
    </citation>
    <scope>PROTEIN SEQUENCE OF 271-284; 328-339 AND 633-659</scope>
</reference>
<reference key="6">
    <citation type="journal article" date="1994" name="DNA Cell Biol.">
        <title>Analysis of the structure and synthesis of GRP94, an abundant stress protein of the endoplasmic reticulum.</title>
        <authorList>
            <person name="Qu D."/>
            <person name="Mazzarella R.A."/>
            <person name="Green M."/>
        </authorList>
    </citation>
    <scope>INTERCHAIN DISULFIDE BOND</scope>
    <scope>GLYCOSYLATION</scope>
</reference>
<reference key="7">
    <citation type="journal article" date="2002" name="Mol. Biol. Cell">
        <title>A subset of chaperones and folding enzymes form multiprotein complexes in endoplasmic reticulum to bind nascent proteins.</title>
        <authorList>
            <person name="Meunier L."/>
            <person name="Usherwood Y.-K."/>
            <person name="Chung K.T."/>
            <person name="Hendershot L.M."/>
        </authorList>
    </citation>
    <scope>COMPONENT OF A CHAPERONE COMPLEX</scope>
</reference>
<reference key="8">
    <citation type="journal article" date="2006" name="J. Biol. Chem.">
        <title>Age-specific CUGBP1-eIF2 complex increases translation of CCAAT/enhancer-binding protein beta in old liver.</title>
        <authorList>
            <person name="Timchenko L.T."/>
            <person name="Salisbury E."/>
            <person name="Wang G.-L."/>
            <person name="Nguyen H."/>
            <person name="Albrecht J.H."/>
            <person name="Hershey J.W."/>
            <person name="Timchenko N.A."/>
        </authorList>
    </citation>
    <scope>IDENTIFICATION IN AN EIF2 COMPLEX WITH EIF2S1; EIF2S2; CELF1; CALR3; HSPA5 AND CALR</scope>
</reference>
<reference key="9">
    <citation type="journal article" date="2010" name="Cell">
        <title>A tissue-specific atlas of mouse protein phosphorylation and expression.</title>
        <authorList>
            <person name="Huttlin E.L."/>
            <person name="Jedrychowski M.P."/>
            <person name="Elias J.E."/>
            <person name="Goswami T."/>
            <person name="Rad R."/>
            <person name="Beausoleil S.A."/>
            <person name="Villen J."/>
            <person name="Haas W."/>
            <person name="Sowa M.E."/>
            <person name="Gygi S.P."/>
        </authorList>
    </citation>
    <scope>IDENTIFICATION BY MASS SPECTROMETRY [LARGE SCALE ANALYSIS]</scope>
    <source>
        <tissue>Brain</tissue>
        <tissue>Brown adipose tissue</tissue>
        <tissue>Heart</tissue>
        <tissue>Kidney</tissue>
        <tissue>Liver</tissue>
        <tissue>Lung</tissue>
        <tissue>Pancreas</tissue>
        <tissue>Spleen</tissue>
        <tissue>Testis</tissue>
    </source>
</reference>
<reference key="10">
    <citation type="journal article" date="2010" name="Immunity">
        <title>Mzb1 protein regulates calcium homeostasis, antibody secretion, and integrin activation in innate-like B cells.</title>
        <authorList>
            <person name="Flach H."/>
            <person name="Rosenbaum M."/>
            <person name="Duchniewicz M."/>
            <person name="Kim S."/>
            <person name="Zhang S.L."/>
            <person name="Cahalan M.D."/>
            <person name="Mittler G."/>
            <person name="Grosschedl R."/>
        </authorList>
    </citation>
    <scope>INTERACTION WITH MZB1</scope>
</reference>
<reference key="11">
    <citation type="journal article" date="2010" name="Nat. Commun.">
        <title>Folding of Toll-like receptors by the HSP90 paralogue gp96 requires a substrate-specific cochaperone.</title>
        <authorList>
            <person name="Liu B."/>
            <person name="Yang Y."/>
            <person name="Qiu Z."/>
            <person name="Staron M."/>
            <person name="Hong F."/>
            <person name="Li Y."/>
            <person name="Wu S."/>
            <person name="Li Y."/>
            <person name="Hao B."/>
            <person name="Bona R."/>
            <person name="Han D."/>
            <person name="Li Z."/>
        </authorList>
    </citation>
    <scope>FUNCTION</scope>
    <scope>CATALYTIC ACTIVITY</scope>
    <scope>INTERACTION WITH CNPY3; TLR4; TLR9 AND TLR11</scope>
    <scope>SUBCELLULAR LOCATION</scope>
    <scope>MUTAGENESIS OF GLU-103</scope>
</reference>
<reference key="12">
    <citation type="journal article" date="2012" name="Nat. Commun.">
        <authorList>
            <person name="Liu B."/>
            <person name="Yang Y."/>
            <person name="Qiu Z."/>
            <person name="Staron M."/>
            <person name="Hong F."/>
            <person name="Li Y."/>
            <person name="Wu S."/>
            <person name="Li Y."/>
            <person name="Hao B."/>
            <person name="Bona R."/>
            <person name="Han D."/>
            <person name="Li Z."/>
        </authorList>
    </citation>
    <scope>ERRATUM OF PUBMED:20865800</scope>
</reference>
<reference key="13">
    <citation type="journal article" date="2007" name="Am. J. Pathol.">
        <title>Aminoacyl-tRNA synthetase-interacting multifunctional protein 1/p43 controls endoplasmic reticulum retention of heat shock protein gp96: its pathological implications in lupus-like autoimmune diseases.</title>
        <authorList>
            <person name="Han J.M."/>
            <person name="Park S.G."/>
            <person name="Liu B."/>
            <person name="Park B.-J."/>
            <person name="Kim J.Y."/>
            <person name="Jin C.H."/>
            <person name="Song Y.W."/>
            <person name="Li Z."/>
            <person name="Kim S."/>
        </authorList>
    </citation>
    <scope>INTERACTION WITH AIMP1</scope>
</reference>
<reference key="14">
    <citation type="journal article" date="2009" name="Nat. Biotechnol.">
        <title>Mass-spectrometric identification and relative quantification of N-linked cell surface glycoproteins.</title>
        <authorList>
            <person name="Wollscheid B."/>
            <person name="Bausch-Fluck D."/>
            <person name="Henderson C."/>
            <person name="O'Brien R."/>
            <person name="Bibel M."/>
            <person name="Schiess R."/>
            <person name="Aebersold R."/>
            <person name="Watts J.D."/>
        </authorList>
    </citation>
    <scope>GLYCOSYLATION [LARGE SCALE ANALYSIS] AT ASN-217</scope>
</reference>
<reference key="15">
    <citation type="journal article" date="2013" name="Mol. Cell">
        <title>SIRT5-mediated lysine desuccinylation impacts diverse metabolic pathways.</title>
        <authorList>
            <person name="Park J."/>
            <person name="Chen Y."/>
            <person name="Tishkoff D.X."/>
            <person name="Peng C."/>
            <person name="Tan M."/>
            <person name="Dai L."/>
            <person name="Xie Z."/>
            <person name="Zhang Y."/>
            <person name="Zwaans B.M."/>
            <person name="Skinner M.E."/>
            <person name="Lombard D.B."/>
            <person name="Zhao Y."/>
        </authorList>
    </citation>
    <scope>ACETYLATION [LARGE SCALE ANALYSIS] AT LYS-479</scope>
    <scope>SUCCINYLATION [LARGE SCALE ANALYSIS] AT LYS-404 AND LYS-633</scope>
    <scope>IDENTIFICATION BY MASS SPECTROMETRY [LARGE SCALE ANALYSIS]</scope>
    <source>
        <tissue>Embryonic fibroblast</tissue>
    </source>
</reference>
<reference key="16">
    <citation type="journal article" date="2013" name="Proc. Natl. Acad. Sci. U.S.A.">
        <title>Essential roles of grp94 in gut homeostasis via chaperoning canonical Wnt pathway.</title>
        <authorList>
            <person name="Liu B."/>
            <person name="Staron M."/>
            <person name="Hong F."/>
            <person name="Wu B.X."/>
            <person name="Sun S."/>
            <person name="Morales C."/>
            <person name="Crosson C.E."/>
            <person name="Tomlinson S."/>
            <person name="Kim I."/>
            <person name="Wu D."/>
            <person name="Li Z."/>
        </authorList>
    </citation>
    <scope>FUNCTION</scope>
    <scope>DISRUPTION PHENOTYPE</scope>
</reference>
<sequence>MRVLWVLGLCCVLLTFGFVRADDEVDVDGTVEEDLGKSREGSRTDDEVVQREEEAIQLDGLNASQIRELREKSEKFAFQAEVNRMMKLIINSLYKNKEIFLRELISNASDALDKIRLISLTDENALAGNEELTVKIKCDKEKNLLHVTDTGVGMTREELVKNLGTIAKSGTSEFLNKMTEAQEDGQSTSELIGQFGVGFYSAFLVADKVIVTSKHNNDTQHIWESDSNEFSVIADPRGNTLGRGTTITLVLKEEASDYLELDTIKNLVRKYSQFINFPIYVWSSKTETVEEPLEEDEAAKEEKEESDDEAAVEEEEEEKKPKTKKVEKTVWDWELMNDIKPIWQRPSKEVEEDEYKAFYKSFSKESDDPMAYIHFTAEGEVTFKSILFVPTSAPRGLFDEYGSKKSDYIKLYVRRVFITDDFHDMMPKYLNFVKGVVDSDDLPLNVSRETLQQHKLLKVIRKKLVRKTLDMIKKIADEKYNDTFWKEFGTNIKLGVIEDHSNRTRLAKLLRFQSSHHSTDITSLDQYVERMKEKQDKIYFMAGSSRKEAESSPFVERLLKKGYEVIYLTEPVDEYCIQALPEFDGKRFQNVAKEGVKFDESEKTKESREATEKEFEPLLNWMKDKALKDKIEKAVVSQRLTESPCALVASQYGWSGNMERIMKAQAYQTGKDISTNYYASQKKTFEINPRHPLIRDMLRRIKEDEDDKTVMDLAVVLFETATLRSGYLLPDTKAYGDRIERMLRLSLNIDPEAQVEEEPEEEPEDTSEDAEDSEQDEGEEMDAGTEEEEEETEKESTEKDEL</sequence>
<dbReference type="EC" id="3.6.4.-" evidence="8"/>
<dbReference type="EMBL" id="J03297">
    <property type="protein sequence ID" value="AAA37573.1"/>
    <property type="molecule type" value="mRNA"/>
</dbReference>
<dbReference type="EMBL" id="M29652">
    <property type="protein sequence ID" value="AAA37743.1"/>
    <property type="molecule type" value="mRNA"/>
</dbReference>
<dbReference type="EMBL" id="M16370">
    <property type="protein sequence ID" value="AAA40023.1"/>
    <property type="molecule type" value="mRNA"/>
</dbReference>
<dbReference type="CCDS" id="CCDS36019.1"/>
<dbReference type="PIR" id="A29317">
    <property type="entry name" value="A29317"/>
</dbReference>
<dbReference type="RefSeq" id="NP_035761.1">
    <property type="nucleotide sequence ID" value="NM_011631.1"/>
</dbReference>
<dbReference type="SASBDB" id="P08113"/>
<dbReference type="SMR" id="P08113"/>
<dbReference type="BioGRID" id="204301">
    <property type="interactions" value="48"/>
</dbReference>
<dbReference type="CORUM" id="P08113"/>
<dbReference type="DIP" id="DIP-32352N"/>
<dbReference type="FunCoup" id="P08113">
    <property type="interactions" value="2630"/>
</dbReference>
<dbReference type="IntAct" id="P08113">
    <property type="interactions" value="16"/>
</dbReference>
<dbReference type="MINT" id="P08113"/>
<dbReference type="STRING" id="10090.ENSMUSP00000020238"/>
<dbReference type="ChEMBL" id="CHEMBL3425396"/>
<dbReference type="GlyConnect" id="2287">
    <property type="glycosylation" value="14 N-Linked glycans (4 sites)"/>
</dbReference>
<dbReference type="GlyCosmos" id="P08113">
    <property type="glycosylation" value="6 sites, 14 glycans"/>
</dbReference>
<dbReference type="GlyGen" id="P08113">
    <property type="glycosylation" value="8 sites, 19 N-linked glycans (6 sites), 1 O-linked glycan (2 sites)"/>
</dbReference>
<dbReference type="iPTMnet" id="P08113"/>
<dbReference type="PhosphoSitePlus" id="P08113"/>
<dbReference type="SwissPalm" id="P08113"/>
<dbReference type="REPRODUCTION-2DPAGE" id="P08113"/>
<dbReference type="jPOST" id="P08113"/>
<dbReference type="PaxDb" id="10090-ENSMUSP00000020238"/>
<dbReference type="PeptideAtlas" id="P08113"/>
<dbReference type="ProteomicsDB" id="275868"/>
<dbReference type="Pumba" id="P08113"/>
<dbReference type="ABCD" id="P08113">
    <property type="antibodies" value="3 sequenced antibodies"/>
</dbReference>
<dbReference type="Antibodypedia" id="1290">
    <property type="antibodies" value="1366 antibodies from 49 providers"/>
</dbReference>
<dbReference type="DNASU" id="22027"/>
<dbReference type="Ensembl" id="ENSMUST00000020238.14">
    <property type="protein sequence ID" value="ENSMUSP00000020238.8"/>
    <property type="gene ID" value="ENSMUSG00000020048.14"/>
</dbReference>
<dbReference type="GeneID" id="22027"/>
<dbReference type="KEGG" id="mmu:22027"/>
<dbReference type="UCSC" id="uc007gqi.1">
    <property type="organism name" value="mouse"/>
</dbReference>
<dbReference type="AGR" id="MGI:98817"/>
<dbReference type="CTD" id="7184"/>
<dbReference type="MGI" id="MGI:98817">
    <property type="gene designation" value="Hsp90b1"/>
</dbReference>
<dbReference type="VEuPathDB" id="HostDB:ENSMUSG00000020048"/>
<dbReference type="eggNOG" id="KOG0020">
    <property type="taxonomic scope" value="Eukaryota"/>
</dbReference>
<dbReference type="GeneTree" id="ENSGT01020000230401"/>
<dbReference type="HOGENOM" id="CLU_006684_1_3_1"/>
<dbReference type="InParanoid" id="P08113"/>
<dbReference type="OMA" id="YMLQETS"/>
<dbReference type="OrthoDB" id="5426351at2759"/>
<dbReference type="PhylomeDB" id="P08113"/>
<dbReference type="TreeFam" id="TF105969"/>
<dbReference type="Reactome" id="R-MMU-1679131">
    <property type="pathway name" value="Trafficking and processing of endosomal TLR"/>
</dbReference>
<dbReference type="Reactome" id="R-MMU-3000480">
    <property type="pathway name" value="Scavenging by Class A Receptors"/>
</dbReference>
<dbReference type="Reactome" id="R-MMU-381426">
    <property type="pathway name" value="Regulation of Insulin-like Growth Factor (IGF) transport and uptake by Insulin-like Growth Factor Binding Proteins (IGFBPs)"/>
</dbReference>
<dbReference type="Reactome" id="R-MMU-6785807">
    <property type="pathway name" value="Interleukin-4 and Interleukin-13 signaling"/>
</dbReference>
<dbReference type="Reactome" id="R-MMU-8957275">
    <property type="pathway name" value="Post-translational protein phosphorylation"/>
</dbReference>
<dbReference type="BioGRID-ORCS" id="22027">
    <property type="hits" value="20 hits in 79 CRISPR screens"/>
</dbReference>
<dbReference type="ChiTaRS" id="Hsp90b1">
    <property type="organism name" value="mouse"/>
</dbReference>
<dbReference type="PRO" id="PR:P08113"/>
<dbReference type="Proteomes" id="UP000000589">
    <property type="component" value="Chromosome 10"/>
</dbReference>
<dbReference type="RNAct" id="P08113">
    <property type="molecule type" value="protein"/>
</dbReference>
<dbReference type="Bgee" id="ENSMUSG00000020048">
    <property type="expression patterns" value="Expressed in embryonic post-anal tail and 252 other cell types or tissues"/>
</dbReference>
<dbReference type="ExpressionAtlas" id="P08113">
    <property type="expression patterns" value="baseline and differential"/>
</dbReference>
<dbReference type="GO" id="GO:0005829">
    <property type="term" value="C:cytosol"/>
    <property type="evidence" value="ECO:0007669"/>
    <property type="project" value="Ensembl"/>
</dbReference>
<dbReference type="GO" id="GO:0005783">
    <property type="term" value="C:endoplasmic reticulum"/>
    <property type="evidence" value="ECO:0000314"/>
    <property type="project" value="MGI"/>
</dbReference>
<dbReference type="GO" id="GO:0034663">
    <property type="term" value="C:endoplasmic reticulum chaperone complex"/>
    <property type="evidence" value="ECO:0000314"/>
    <property type="project" value="ParkinsonsUK-UCL"/>
</dbReference>
<dbReference type="GO" id="GO:0005788">
    <property type="term" value="C:endoplasmic reticulum lumen"/>
    <property type="evidence" value="ECO:0000266"/>
    <property type="project" value="MGI"/>
</dbReference>
<dbReference type="GO" id="GO:0005789">
    <property type="term" value="C:endoplasmic reticulum membrane"/>
    <property type="evidence" value="ECO:0007669"/>
    <property type="project" value="Ensembl"/>
</dbReference>
<dbReference type="GO" id="GO:0005576">
    <property type="term" value="C:extracellular region"/>
    <property type="evidence" value="ECO:0000304"/>
    <property type="project" value="Reactome"/>
</dbReference>
<dbReference type="GO" id="GO:0042470">
    <property type="term" value="C:melanosome"/>
    <property type="evidence" value="ECO:0007669"/>
    <property type="project" value="UniProtKB-SubCell"/>
</dbReference>
<dbReference type="GO" id="GO:0030496">
    <property type="term" value="C:midbody"/>
    <property type="evidence" value="ECO:0007669"/>
    <property type="project" value="Ensembl"/>
</dbReference>
<dbReference type="GO" id="GO:0048471">
    <property type="term" value="C:perinuclear region of cytoplasm"/>
    <property type="evidence" value="ECO:0007669"/>
    <property type="project" value="Ensembl"/>
</dbReference>
<dbReference type="GO" id="GO:0033018">
    <property type="term" value="C:sarcoplasmic reticulum lumen"/>
    <property type="evidence" value="ECO:0007669"/>
    <property type="project" value="UniProtKB-SubCell"/>
</dbReference>
<dbReference type="GO" id="GO:0005790">
    <property type="term" value="C:smooth endoplasmic reticulum"/>
    <property type="evidence" value="ECO:0007669"/>
    <property type="project" value="Ensembl"/>
</dbReference>
<dbReference type="GO" id="GO:0097524">
    <property type="term" value="C:sperm plasma membrane"/>
    <property type="evidence" value="ECO:0000314"/>
    <property type="project" value="MGI"/>
</dbReference>
<dbReference type="GO" id="GO:0005524">
    <property type="term" value="F:ATP binding"/>
    <property type="evidence" value="ECO:0007669"/>
    <property type="project" value="UniProtKB-KW"/>
</dbReference>
<dbReference type="GO" id="GO:0016887">
    <property type="term" value="F:ATP hydrolysis activity"/>
    <property type="evidence" value="ECO:0007669"/>
    <property type="project" value="InterPro"/>
</dbReference>
<dbReference type="GO" id="GO:0140662">
    <property type="term" value="F:ATP-dependent protein folding chaperone"/>
    <property type="evidence" value="ECO:0007669"/>
    <property type="project" value="Ensembl"/>
</dbReference>
<dbReference type="GO" id="GO:0050750">
    <property type="term" value="F:low-density lipoprotein particle receptor binding"/>
    <property type="evidence" value="ECO:0000266"/>
    <property type="project" value="MGI"/>
</dbReference>
<dbReference type="GO" id="GO:0044183">
    <property type="term" value="F:protein folding chaperone"/>
    <property type="evidence" value="ECO:0000266"/>
    <property type="project" value="MGI"/>
</dbReference>
<dbReference type="GO" id="GO:0019903">
    <property type="term" value="F:protein phosphatase binding"/>
    <property type="evidence" value="ECO:0000266"/>
    <property type="project" value="MGI"/>
</dbReference>
<dbReference type="GO" id="GO:0004864">
    <property type="term" value="F:protein phosphatase inhibitor activity"/>
    <property type="evidence" value="ECO:0000266"/>
    <property type="project" value="MGI"/>
</dbReference>
<dbReference type="GO" id="GO:0003723">
    <property type="term" value="F:RNA binding"/>
    <property type="evidence" value="ECO:0007669"/>
    <property type="project" value="Ensembl"/>
</dbReference>
<dbReference type="GO" id="GO:0051082">
    <property type="term" value="F:unfolded protein binding"/>
    <property type="evidence" value="ECO:0007669"/>
    <property type="project" value="InterPro"/>
</dbReference>
<dbReference type="GO" id="GO:0031247">
    <property type="term" value="P:actin rod assembly"/>
    <property type="evidence" value="ECO:0000266"/>
    <property type="project" value="MGI"/>
</dbReference>
<dbReference type="GO" id="GO:0071318">
    <property type="term" value="P:cellular response to ATP"/>
    <property type="evidence" value="ECO:0000266"/>
    <property type="project" value="MGI"/>
</dbReference>
<dbReference type="GO" id="GO:0071287">
    <property type="term" value="P:cellular response to manganese ion"/>
    <property type="evidence" value="ECO:0007669"/>
    <property type="project" value="Ensembl"/>
</dbReference>
<dbReference type="GO" id="GO:0036503">
    <property type="term" value="P:ERAD pathway"/>
    <property type="evidence" value="ECO:0000250"/>
    <property type="project" value="UniProtKB"/>
</dbReference>
<dbReference type="GO" id="GO:0030070">
    <property type="term" value="P:insulin processing"/>
    <property type="evidence" value="ECO:0000266"/>
    <property type="project" value="MGI"/>
</dbReference>
<dbReference type="GO" id="GO:0043066">
    <property type="term" value="P:negative regulation of apoptotic process"/>
    <property type="evidence" value="ECO:0007669"/>
    <property type="project" value="Ensembl"/>
</dbReference>
<dbReference type="GO" id="GO:0034123">
    <property type="term" value="P:positive regulation of toll-like receptor signaling pathway"/>
    <property type="evidence" value="ECO:0007669"/>
    <property type="project" value="Ensembl"/>
</dbReference>
<dbReference type="GO" id="GO:0030177">
    <property type="term" value="P:positive regulation of Wnt signaling pathway"/>
    <property type="evidence" value="ECO:0007669"/>
    <property type="project" value="Ensembl"/>
</dbReference>
<dbReference type="GO" id="GO:0072659">
    <property type="term" value="P:protein localization to plasma membrane"/>
    <property type="evidence" value="ECO:0007669"/>
    <property type="project" value="Ensembl"/>
</dbReference>
<dbReference type="GO" id="GO:0001666">
    <property type="term" value="P:response to hypoxia"/>
    <property type="evidence" value="ECO:0007669"/>
    <property type="project" value="Ensembl"/>
</dbReference>
<dbReference type="GO" id="GO:0030970">
    <property type="term" value="P:retrograde protein transport, ER to cytosol"/>
    <property type="evidence" value="ECO:0007669"/>
    <property type="project" value="Ensembl"/>
</dbReference>
<dbReference type="CDD" id="cd16927">
    <property type="entry name" value="HATPase_Hsp90-like"/>
    <property type="match status" value="1"/>
</dbReference>
<dbReference type="FunFam" id="3.30.230.80:FF:000003">
    <property type="entry name" value="endoplasmin isoform X1"/>
    <property type="match status" value="1"/>
</dbReference>
<dbReference type="FunFam" id="1.20.120.790:FF:000003">
    <property type="entry name" value="Heat shock protein 90"/>
    <property type="match status" value="1"/>
</dbReference>
<dbReference type="FunFam" id="3.30.565.10:FF:000005">
    <property type="entry name" value="Heat shock protein 90"/>
    <property type="match status" value="1"/>
</dbReference>
<dbReference type="FunFam" id="3.40.50.11260:FF:000003">
    <property type="entry name" value="Heat shock protein 90"/>
    <property type="match status" value="1"/>
</dbReference>
<dbReference type="Gene3D" id="3.30.230.80">
    <property type="match status" value="1"/>
</dbReference>
<dbReference type="Gene3D" id="3.40.50.11260">
    <property type="match status" value="1"/>
</dbReference>
<dbReference type="Gene3D" id="1.20.120.790">
    <property type="entry name" value="Heat shock protein 90, C-terminal domain"/>
    <property type="match status" value="1"/>
</dbReference>
<dbReference type="Gene3D" id="3.30.565.10">
    <property type="entry name" value="Histidine kinase-like ATPase, C-terminal domain"/>
    <property type="match status" value="1"/>
</dbReference>
<dbReference type="HAMAP" id="MF_00505">
    <property type="entry name" value="HSP90"/>
    <property type="match status" value="1"/>
</dbReference>
<dbReference type="InterPro" id="IPR036890">
    <property type="entry name" value="HATPase_C_sf"/>
</dbReference>
<dbReference type="InterPro" id="IPR019805">
    <property type="entry name" value="Heat_shock_protein_90_CS"/>
</dbReference>
<dbReference type="InterPro" id="IPR037196">
    <property type="entry name" value="HSP90_C"/>
</dbReference>
<dbReference type="InterPro" id="IPR001404">
    <property type="entry name" value="Hsp90_fam"/>
</dbReference>
<dbReference type="InterPro" id="IPR020575">
    <property type="entry name" value="Hsp90_N"/>
</dbReference>
<dbReference type="InterPro" id="IPR020568">
    <property type="entry name" value="Ribosomal_Su5_D2-typ_SF"/>
</dbReference>
<dbReference type="NCBIfam" id="NF003555">
    <property type="entry name" value="PRK05218.1"/>
    <property type="match status" value="1"/>
</dbReference>
<dbReference type="PANTHER" id="PTHR11528">
    <property type="entry name" value="HEAT SHOCK PROTEIN 90 FAMILY MEMBER"/>
    <property type="match status" value="1"/>
</dbReference>
<dbReference type="Pfam" id="PF13589">
    <property type="entry name" value="HATPase_c_3"/>
    <property type="match status" value="1"/>
</dbReference>
<dbReference type="Pfam" id="PF00183">
    <property type="entry name" value="HSP90"/>
    <property type="match status" value="1"/>
</dbReference>
<dbReference type="PIRSF" id="PIRSF002583">
    <property type="entry name" value="Hsp90"/>
    <property type="match status" value="1"/>
</dbReference>
<dbReference type="PRINTS" id="PR00775">
    <property type="entry name" value="HEATSHOCK90"/>
</dbReference>
<dbReference type="SMART" id="SM00387">
    <property type="entry name" value="HATPase_c"/>
    <property type="match status" value="1"/>
</dbReference>
<dbReference type="SUPFAM" id="SSF55874">
    <property type="entry name" value="ATPase domain of HSP90 chaperone/DNA topoisomerase II/histidine kinase"/>
    <property type="match status" value="1"/>
</dbReference>
<dbReference type="SUPFAM" id="SSF110942">
    <property type="entry name" value="HSP90 C-terminal domain"/>
    <property type="match status" value="1"/>
</dbReference>
<dbReference type="SUPFAM" id="SSF54211">
    <property type="entry name" value="Ribosomal protein S5 domain 2-like"/>
    <property type="match status" value="1"/>
</dbReference>
<dbReference type="PROSITE" id="PS00014">
    <property type="entry name" value="ER_TARGET"/>
    <property type="match status" value="1"/>
</dbReference>
<dbReference type="PROSITE" id="PS00298">
    <property type="entry name" value="HSP90"/>
    <property type="match status" value="1"/>
</dbReference>
<accession>P08113</accession>
<accession>P11427</accession>
<comment type="function">
    <text evidence="1 8 10">ATP-dependent chaperone involved in the processing of proteins in the endoplasmic reticulum, regulating their transport (PubMed:20865800, PubMed:23572575). Together with MESD, acts as a modulator of the Wnt pathway by promoting the folding of LRP6, a coreceptor of the canonical Wnt pathway (PubMed:23572575). When associated with CNPY3, required for proper folding of Toll-like receptors (PubMed:20865800). Promotes folding and trafficking of TLR4 to the cell surface (By similarity). May participate in the unfolding of cytosolic leaderless cargos (lacking the secretion signal sequence) such as the interleukin 1/IL-1 to facilitate their translocation into the ERGIC (endoplasmic reticulum-Golgi intermediate compartment) and secretion; the translocation process is mediated by the cargo receptor TMED10 (By similarity).</text>
</comment>
<comment type="catalytic activity">
    <reaction evidence="8">
        <text>ATP + H2O = ADP + phosphate + H(+)</text>
        <dbReference type="Rhea" id="RHEA:13065"/>
        <dbReference type="ChEBI" id="CHEBI:15377"/>
        <dbReference type="ChEBI" id="CHEBI:15378"/>
        <dbReference type="ChEBI" id="CHEBI:30616"/>
        <dbReference type="ChEBI" id="CHEBI:43474"/>
        <dbReference type="ChEBI" id="CHEBI:456216"/>
    </reaction>
    <physiologicalReaction direction="left-to-right" evidence="8">
        <dbReference type="Rhea" id="RHEA:13066"/>
    </physiologicalReaction>
</comment>
<comment type="subunit">
    <text evidence="1 6 8 9 11">Homodimer; disulfide-linked (PubMed:8179819). Component of an EIF2 complex at least composed of CELF1/CUGBP1, CALR, CALR3, EIF2S1, EIF2S2, HSP90B1 and HSPA5 (PubMed:16931514). Part of a large chaperone multiprotein complex comprising DNAJB11, HSP90B1, HSPA5, HYOU, PDIA2, PDIA4, PDIA6, PPIB, SDF2L1, UGGT1 and very small amounts of ERP29, but not, or at very low levels, CALR nor CANX (PubMed:12475965). Hyperglycosylated form interacts with OS9; promoting its degradation by the endoplasmic reticulum associated degradation (ERAD) (By similarity). Interacts with AIMP1; regulates its retention in the endoplasmic reticulum (PubMed:17525271). Interacts with CNPY3; this interaction is disrupted in the presence of ATP (PubMed:20865800). Interacts with TLR4, TLR9 and TLR11, but not with TLR3 (PubMed:20865800). Interacts with MZB1 in a calcium-dependent manner (PubMed:21093319). Interacts with METTL23 (By similarity). Interacts with IL1B; the interaction facilitates cargo translocation into the ERGIC (By similarity). Interacts with EIF2AK3 (By similarity).</text>
</comment>
<comment type="subcellular location">
    <subcellularLocation>
        <location evidence="8">Endoplasmic reticulum lumen</location>
    </subcellularLocation>
    <subcellularLocation>
        <location evidence="2">Sarcoplasmic reticulum lumen</location>
    </subcellularLocation>
    <subcellularLocation>
        <location evidence="1">Melanosome</location>
    </subcellularLocation>
</comment>
<comment type="domain">
    <text evidence="1">The SRT pseudosubstrate motif associates with STT3A during translation in normal conditions, preventing glycosylation of facultative sites until HSP90B1 folding is completed.</text>
</comment>
<comment type="PTM">
    <text evidence="2">Phosphorylated by CK2.</text>
</comment>
<comment type="PTM">
    <text evidence="1 11">N-glycosylated cotranslationally at Asn-217 by STT3A-containing OST-A complex: this glycosylation is constitutive (PubMed:8179819). In response to various stress, 5 additional facultative sites (Asn-62, Asn-107, Asn-445, Asn-481 and Asn-502) can be glycosylated post-translationally by STT3B-containing OST-B complex, leading to a hyperglycosylated form that is degraded by the ER-associated degradation (ERAD) pathway (By similarity). In normal conditions, the OST-A complex together with CCDC134 prevent glycosylation at facultative sites during protein folding, thereby preventing hyperglycosylation (By similarity). Mechanistically, nascent HSP90B1 is tethered during translation to a specialized CCDC134-containing translocon that forms a microenvironment for its folding, in which STT3A associates with the SRT pseudosubstrate motif, and prevents access to facultative glycosylation sites until folding is completed, rendering its facultative sites inaccessible to the OST-B complex (By similarity).</text>
</comment>
<comment type="disruption phenotype">
    <text evidence="10">Conditional deletion in the intestine leads to postnatal death without affecting embryogenesis (PubMed:23572575). Defects in the proliferation of intestinal crypts is observed, probably due to impaired Wnt signaling (PubMed:23572575).</text>
</comment>
<comment type="similarity">
    <text evidence="13">Belongs to the heat shock protein 90 family.</text>
</comment>
<gene>
    <name type="primary">Hsp90b1</name>
    <name type="synonym">Grp94</name>
    <name evidence="1" type="synonym">Hspc4</name>
    <name type="synonym">Tra-1</name>
    <name type="synonym">Tra1</name>
</gene>
<organism>
    <name type="scientific">Mus musculus</name>
    <name type="common">Mouse</name>
    <dbReference type="NCBI Taxonomy" id="10090"/>
    <lineage>
        <taxon>Eukaryota</taxon>
        <taxon>Metazoa</taxon>
        <taxon>Chordata</taxon>
        <taxon>Craniata</taxon>
        <taxon>Vertebrata</taxon>
        <taxon>Euteleostomi</taxon>
        <taxon>Mammalia</taxon>
        <taxon>Eutheria</taxon>
        <taxon>Euarchontoglires</taxon>
        <taxon>Glires</taxon>
        <taxon>Rodentia</taxon>
        <taxon>Myomorpha</taxon>
        <taxon>Muroidea</taxon>
        <taxon>Muridae</taxon>
        <taxon>Murinae</taxon>
        <taxon>Mus</taxon>
        <taxon>Mus</taxon>
    </lineage>
</organism>
<name>ENPL_MOUSE</name>
<evidence type="ECO:0000250" key="1">
    <source>
        <dbReference type="UniProtKB" id="P14625"/>
    </source>
</evidence>
<evidence type="ECO:0000250" key="2">
    <source>
        <dbReference type="UniProtKB" id="P41148"/>
    </source>
</evidence>
<evidence type="ECO:0000250" key="3">
    <source>
        <dbReference type="UniProtKB" id="Q66HD0"/>
    </source>
</evidence>
<evidence type="ECO:0000255" key="4"/>
<evidence type="ECO:0000256" key="5">
    <source>
        <dbReference type="SAM" id="MobiDB-lite"/>
    </source>
</evidence>
<evidence type="ECO:0000269" key="6">
    <source>
    </source>
</evidence>
<evidence type="ECO:0000269" key="7">
    <source>
    </source>
</evidence>
<evidence type="ECO:0000269" key="8">
    <source>
    </source>
</evidence>
<evidence type="ECO:0000269" key="9">
    <source>
    </source>
</evidence>
<evidence type="ECO:0000269" key="10">
    <source>
    </source>
</evidence>
<evidence type="ECO:0000269" key="11">
    <source>
    </source>
</evidence>
<evidence type="ECO:0000303" key="12">
    <source>
    </source>
</evidence>
<evidence type="ECO:0000305" key="13"/>
<evidence type="ECO:0007744" key="14">
    <source>
    </source>
</evidence>
<keyword id="KW-0007">Acetylation</keyword>
<keyword id="KW-0067">ATP-binding</keyword>
<keyword id="KW-0106">Calcium</keyword>
<keyword id="KW-0143">Chaperone</keyword>
<keyword id="KW-0903">Direct protein sequencing</keyword>
<keyword id="KW-1015">Disulfide bond</keyword>
<keyword id="KW-0256">Endoplasmic reticulum</keyword>
<keyword id="KW-0325">Glycoprotein</keyword>
<keyword id="KW-0378">Hydrolase</keyword>
<keyword id="KW-0379">Hydroxylation</keyword>
<keyword id="KW-0547">Nucleotide-binding</keyword>
<keyword id="KW-0597">Phosphoprotein</keyword>
<keyword id="KW-1185">Reference proteome</keyword>
<keyword id="KW-0703">Sarcoplasmic reticulum</keyword>
<keyword id="KW-0732">Signal</keyword>
<feature type="signal peptide" evidence="4">
    <location>
        <begin position="1"/>
        <end position="21"/>
    </location>
</feature>
<feature type="chain" id="PRO_0000013599" description="Endoplasmin">
    <location>
        <begin position="22"/>
        <end position="802"/>
    </location>
</feature>
<feature type="region of interest" description="Disordered" evidence="5">
    <location>
        <begin position="290"/>
        <end position="323"/>
    </location>
</feature>
<feature type="region of interest" description="Disordered" evidence="5">
    <location>
        <begin position="749"/>
        <end position="802"/>
    </location>
</feature>
<feature type="short sequence motif" description="SRT pseudosubstrate motif" evidence="1">
    <location>
        <begin position="42"/>
        <end position="44"/>
    </location>
</feature>
<feature type="short sequence motif" description="Prevents secretion from ER">
    <location>
        <begin position="799"/>
        <end position="802"/>
    </location>
</feature>
<feature type="compositionally biased region" description="Acidic residues" evidence="5">
    <location>
        <begin position="290"/>
        <end position="317"/>
    </location>
</feature>
<feature type="compositionally biased region" description="Acidic residues" evidence="5">
    <location>
        <begin position="753"/>
        <end position="793"/>
    </location>
</feature>
<feature type="binding site" evidence="2">
    <location>
        <position position="107"/>
    </location>
    <ligand>
        <name>ATP</name>
        <dbReference type="ChEBI" id="CHEBI:30616"/>
    </ligand>
</feature>
<feature type="binding site" evidence="2">
    <location>
        <position position="149"/>
    </location>
    <ligand>
        <name>ATP</name>
        <dbReference type="ChEBI" id="CHEBI:30616"/>
    </ligand>
</feature>
<feature type="binding site" evidence="2">
    <location>
        <position position="162"/>
    </location>
    <ligand>
        <name>ATP</name>
        <dbReference type="ChEBI" id="CHEBI:30616"/>
    </ligand>
</feature>
<feature type="binding site" evidence="2">
    <location>
        <position position="199"/>
    </location>
    <ligand>
        <name>ATP</name>
        <dbReference type="ChEBI" id="CHEBI:30616"/>
    </ligand>
</feature>
<feature type="site" description="Important for ATP hydrolysis" evidence="2">
    <location>
        <position position="448"/>
    </location>
</feature>
<feature type="modified residue" description="Phosphoserine" evidence="1">
    <location>
        <position position="64"/>
    </location>
</feature>
<feature type="modified residue" description="N6-(2-hydroxyisobutyryl)lysine" evidence="1">
    <location>
        <position position="168"/>
    </location>
</feature>
<feature type="modified residue" description="Phosphoserine" evidence="3">
    <location>
        <position position="172"/>
    </location>
</feature>
<feature type="modified residue" description="Phosphoserine" evidence="1">
    <location>
        <position position="306"/>
    </location>
</feature>
<feature type="modified residue" description="Phosphoserine" evidence="3">
    <location>
        <position position="403"/>
    </location>
</feature>
<feature type="modified residue" description="N6-succinyllysine" evidence="14">
    <location>
        <position position="404"/>
    </location>
</feature>
<feature type="modified residue" description="Phosphoserine" evidence="1">
    <location>
        <position position="447"/>
    </location>
</feature>
<feature type="modified residue" description="N6-acetyllysine" evidence="14">
    <location>
        <position position="479"/>
    </location>
</feature>
<feature type="modified residue" description="N6-succinyllysine" evidence="14">
    <location>
        <position position="633"/>
    </location>
</feature>
<feature type="modified residue" description="Phosphothreonine" evidence="1">
    <location>
        <position position="785"/>
    </location>
</feature>
<feature type="glycosylation site" description="N-linked (GlcNAc...) asparagine" evidence="4">
    <location>
        <position position="62"/>
    </location>
</feature>
<feature type="glycosylation site" description="N-linked (GlcNAc...) asparagine" evidence="4">
    <location>
        <position position="107"/>
    </location>
</feature>
<feature type="glycosylation site" description="N-linked (GlcNAc...) asparagine" evidence="7">
    <location>
        <position position="217"/>
    </location>
</feature>
<feature type="glycosylation site" description="N-linked (GlcNAc...) asparagine" evidence="4">
    <location>
        <position position="445"/>
    </location>
</feature>
<feature type="glycosylation site" description="N-linked (GlcNAc...) asparagine" evidence="4">
    <location>
        <position position="481"/>
    </location>
</feature>
<feature type="glycosylation site" description="N-linked (GlcNAc...) asparagine" evidence="4">
    <location>
        <position position="502"/>
    </location>
</feature>
<feature type="disulfide bond" description="Interchain" evidence="11">
    <location>
        <position position="138"/>
    </location>
</feature>
<feature type="mutagenesis site" description="Loss of CNPY3-binding." evidence="8">
    <original>E</original>
    <variation>A</variation>
    <location>
        <position position="103"/>
    </location>
</feature>